<sequence>MALRFFNDISRDVNGLFNRDFFHTNPLSLNISTTTENGVNFTLKAKQGVTEGPIQTSVEGRFYDRKEGVSLSQSWSNQNRLNTRIEFSKIAPGWKGDVNAFLTPQSIKNAKFNLSYAQKSFAARTSIDILQPKDFVGSVTLGHRGFVGGTDIAYDTAAGLCARYAMSIGYLAREYSFILSTNNRQCATASFFQNVNRYLQVGTKATLQSKTSSNMNIEFVTRYVPDSISQVKAKIADSGLTTLSYKRNLNKDISLGVGMSFNALQLTEPVHKFGWSLSFSP</sequence>
<protein>
    <recommendedName>
        <fullName evidence="4">Non-selective voltage-gated ion channel 2</fullName>
    </recommendedName>
    <alternativeName>
        <fullName evidence="4">Outer mitochondrial membrane protein porin 2</fullName>
    </alternativeName>
    <alternativeName>
        <fullName>Voltage-dependent anion-selective channel protein 2</fullName>
        <shortName>VDAC-2</shortName>
    </alternativeName>
</protein>
<reference key="1">
    <citation type="journal article" date="1997" name="Nature">
        <title>The nucleotide sequence of Saccharomyces cerevisiae chromosome IX.</title>
        <authorList>
            <person name="Churcher C.M."/>
            <person name="Bowman S."/>
            <person name="Badcock K."/>
            <person name="Bankier A.T."/>
            <person name="Brown D."/>
            <person name="Chillingworth T."/>
            <person name="Connor R."/>
            <person name="Devlin K."/>
            <person name="Gentles S."/>
            <person name="Hamlin N."/>
            <person name="Harris D.E."/>
            <person name="Horsnell T."/>
            <person name="Hunt S."/>
            <person name="Jagels K."/>
            <person name="Jones M."/>
            <person name="Lye G."/>
            <person name="Moule S."/>
            <person name="Odell C."/>
            <person name="Pearson D."/>
            <person name="Rajandream M.A."/>
            <person name="Rice P."/>
            <person name="Rowley N."/>
            <person name="Skelton J."/>
            <person name="Smith V."/>
            <person name="Walsh S.V."/>
            <person name="Whitehead S."/>
            <person name="Barrell B.G."/>
        </authorList>
    </citation>
    <scope>NUCLEOTIDE SEQUENCE [LARGE SCALE GENOMIC DNA]</scope>
    <source>
        <strain>ATCC 204508 / S288c</strain>
    </source>
</reference>
<reference key="2">
    <citation type="journal article" date="2014" name="G3 (Bethesda)">
        <title>The reference genome sequence of Saccharomyces cerevisiae: Then and now.</title>
        <authorList>
            <person name="Engel S.R."/>
            <person name="Dietrich F.S."/>
            <person name="Fisk D.G."/>
            <person name="Binkley G."/>
            <person name="Balakrishnan R."/>
            <person name="Costanzo M.C."/>
            <person name="Dwight S.S."/>
            <person name="Hitz B.C."/>
            <person name="Karra K."/>
            <person name="Nash R.S."/>
            <person name="Weng S."/>
            <person name="Wong E.D."/>
            <person name="Lloyd P."/>
            <person name="Skrzypek M.S."/>
            <person name="Miyasato S.R."/>
            <person name="Simison M."/>
            <person name="Cherry J.M."/>
        </authorList>
    </citation>
    <scope>GENOME REANNOTATION</scope>
    <source>
        <strain>ATCC 204508 / S288c</strain>
    </source>
</reference>
<reference key="3">
    <citation type="journal article" date="2007" name="Genome Res.">
        <title>Approaching a complete repository of sequence-verified protein-encoding clones for Saccharomyces cerevisiae.</title>
        <authorList>
            <person name="Hu Y."/>
            <person name="Rolfs A."/>
            <person name="Bhullar B."/>
            <person name="Murthy T.V.S."/>
            <person name="Zhu C."/>
            <person name="Berger M.F."/>
            <person name="Camargo A.A."/>
            <person name="Kelley F."/>
            <person name="McCarron S."/>
            <person name="Jepson D."/>
            <person name="Richardson A."/>
            <person name="Raphael J."/>
            <person name="Moreira D."/>
            <person name="Taycher E."/>
            <person name="Zuo D."/>
            <person name="Mohr S."/>
            <person name="Kane M.F."/>
            <person name="Williamson J."/>
            <person name="Simpson A.J.G."/>
            <person name="Bulyk M.L."/>
            <person name="Harlow E."/>
            <person name="Marsischky G."/>
            <person name="Kolodner R.D."/>
            <person name="LaBaer J."/>
        </authorList>
    </citation>
    <scope>NUCLEOTIDE SEQUENCE [GENOMIC DNA]</scope>
    <source>
        <strain>ATCC 204508 / S288c</strain>
    </source>
</reference>
<reference key="4">
    <citation type="journal article" date="1997" name="Mol. Cell. Biol.">
        <title>Multicopy suppressors of phenotypes resulting from the absence of yeast VDAC encode a VDAC-like protein.</title>
        <authorList>
            <person name="Blachly-Dyson E."/>
            <person name="Song J."/>
            <person name="Colombini M."/>
            <person name="Forte M.A."/>
        </authorList>
    </citation>
    <scope>CHARACTERIZATION</scope>
</reference>
<reference key="5">
    <citation type="journal article" date="1998" name="J. Membr. Biol.">
        <title>The role of yeast VDAC genes on the permeability of the mitochondrial outer membrane.</title>
        <authorList>
            <person name="Lee A.C."/>
            <person name="Xu X."/>
            <person name="Blachly-Dyson E."/>
            <person name="Forte M.A."/>
            <person name="Colombini M."/>
        </authorList>
    </citation>
    <scope>FUNCTION</scope>
</reference>
<name>VDAC2_YEAST</name>
<evidence type="ECO:0000250" key="1">
    <source>
        <dbReference type="UniProtKB" id="P04840"/>
    </source>
</evidence>
<evidence type="ECO:0000250" key="2">
    <source>
        <dbReference type="UniProtKB" id="Q60932"/>
    </source>
</evidence>
<evidence type="ECO:0000269" key="3">
    <source>
    </source>
</evidence>
<evidence type="ECO:0000305" key="4"/>
<organism>
    <name type="scientific">Saccharomyces cerevisiae (strain ATCC 204508 / S288c)</name>
    <name type="common">Baker's yeast</name>
    <dbReference type="NCBI Taxonomy" id="559292"/>
    <lineage>
        <taxon>Eukaryota</taxon>
        <taxon>Fungi</taxon>
        <taxon>Dikarya</taxon>
        <taxon>Ascomycota</taxon>
        <taxon>Saccharomycotina</taxon>
        <taxon>Saccharomycetes</taxon>
        <taxon>Saccharomycetales</taxon>
        <taxon>Saccharomycetaceae</taxon>
        <taxon>Saccharomyces</taxon>
    </lineage>
</organism>
<keyword id="KW-0067">ATP-binding</keyword>
<keyword id="KW-0406">Ion transport</keyword>
<keyword id="KW-0445">Lipid transport</keyword>
<keyword id="KW-0472">Membrane</keyword>
<keyword id="KW-0496">Mitochondrion</keyword>
<keyword id="KW-1000">Mitochondrion outer membrane</keyword>
<keyword id="KW-0547">Nucleotide-binding</keyword>
<keyword id="KW-0626">Porin</keyword>
<keyword id="KW-1185">Reference proteome</keyword>
<keyword id="KW-0812">Transmembrane</keyword>
<keyword id="KW-1134">Transmembrane beta strand</keyword>
<keyword id="KW-0813">Transport</keyword>
<feature type="chain" id="PRO_0000050525" description="Non-selective voltage-gated ion channel 2">
    <location>
        <begin position="1"/>
        <end position="281"/>
    </location>
</feature>
<feature type="binding site" evidence="2">
    <location>
        <position position="11"/>
    </location>
    <ligand>
        <name>ATP</name>
        <dbReference type="ChEBI" id="CHEBI:30616"/>
    </ligand>
</feature>
<feature type="binding site" evidence="2">
    <location>
        <position position="19"/>
    </location>
    <ligand>
        <name>ATP</name>
        <dbReference type="ChEBI" id="CHEBI:30616"/>
    </ligand>
</feature>
<accession>P40478</accession>
<accession>D6VVH3</accession>
<comment type="function">
    <text evidence="1 3">Non-selective voltage-gated ion channel that mediates the transport of anions and cations through the mitochondrion outer membrane. The channel adopts an open conformation at low or zero membrane potential and a closed conformation at potentials above 30-40 mV. The open state has a weak anion selectivity whereas the closed state is cation-selective (By similarity). Does not confer permeability to NADH (PubMed:9435273).</text>
</comment>
<comment type="function">
    <text evidence="1">Catalyzes the scrambling of phospholipids across the outer mitochondrial membrane; the mechanism is unrelated to channel activity and is capable of translocating both anionic and zwitterionic phospholipids.</text>
</comment>
<comment type="subcellular location">
    <subcellularLocation>
        <location evidence="1">Mitochondrion outer membrane</location>
    </subcellularLocation>
</comment>
<comment type="similarity">
    <text evidence="4">Belongs to the eukaryotic mitochondrial porin family.</text>
</comment>
<gene>
    <name type="primary">POR2</name>
    <name type="ordered locus">YIL114C</name>
</gene>
<proteinExistence type="evidence at protein level"/>
<dbReference type="EMBL" id="Z38125">
    <property type="protein sequence ID" value="CAA86266.1"/>
    <property type="molecule type" value="Genomic_DNA"/>
</dbReference>
<dbReference type="EMBL" id="AY692875">
    <property type="protein sequence ID" value="AAT92894.1"/>
    <property type="molecule type" value="Genomic_DNA"/>
</dbReference>
<dbReference type="EMBL" id="BK006942">
    <property type="protein sequence ID" value="DAA08439.1"/>
    <property type="molecule type" value="Genomic_DNA"/>
</dbReference>
<dbReference type="PIR" id="S48458">
    <property type="entry name" value="S48458"/>
</dbReference>
<dbReference type="RefSeq" id="NP_012152.3">
    <property type="nucleotide sequence ID" value="NM_001179462.3"/>
</dbReference>
<dbReference type="SMR" id="P40478"/>
<dbReference type="BioGRID" id="34877">
    <property type="interactions" value="32"/>
</dbReference>
<dbReference type="DIP" id="DIP-7189N"/>
<dbReference type="FunCoup" id="P40478">
    <property type="interactions" value="980"/>
</dbReference>
<dbReference type="IntAct" id="P40478">
    <property type="interactions" value="4"/>
</dbReference>
<dbReference type="MINT" id="P40478"/>
<dbReference type="STRING" id="4932.YIL114C"/>
<dbReference type="TCDB" id="1.B.8.1.18">
    <property type="family name" value="the mitochondrial and plastid porin (mpp) family"/>
</dbReference>
<dbReference type="iPTMnet" id="P40478"/>
<dbReference type="PaxDb" id="4932-YIL114C"/>
<dbReference type="PeptideAtlas" id="P40478"/>
<dbReference type="DNASU" id="854692"/>
<dbReference type="EnsemblFungi" id="YIL114C_mRNA">
    <property type="protein sequence ID" value="YIL114C"/>
    <property type="gene ID" value="YIL114C"/>
</dbReference>
<dbReference type="GeneID" id="854692"/>
<dbReference type="KEGG" id="sce:YIL114C"/>
<dbReference type="AGR" id="SGD:S000001376"/>
<dbReference type="SGD" id="S000001376">
    <property type="gene designation" value="POR2"/>
</dbReference>
<dbReference type="VEuPathDB" id="FungiDB:YIL114C"/>
<dbReference type="eggNOG" id="KOG3126">
    <property type="taxonomic scope" value="Eukaryota"/>
</dbReference>
<dbReference type="GeneTree" id="ENSGT00950000182869"/>
<dbReference type="HOGENOM" id="CLU_044399_0_1_1"/>
<dbReference type="InParanoid" id="P40478"/>
<dbReference type="OMA" id="FKQPAFH"/>
<dbReference type="OrthoDB" id="7827681at2759"/>
<dbReference type="BioCyc" id="YEAST:G3O-31368-MONOMER"/>
<dbReference type="Reactome" id="R-SCE-5205685">
    <property type="pathway name" value="PINK1-PRKN Mediated Mitophagy"/>
</dbReference>
<dbReference type="Reactome" id="R-SCE-70268">
    <property type="pathway name" value="Pyruvate metabolism"/>
</dbReference>
<dbReference type="BioGRID-ORCS" id="854692">
    <property type="hits" value="0 hits in 10 CRISPR screens"/>
</dbReference>
<dbReference type="PRO" id="PR:P40478"/>
<dbReference type="Proteomes" id="UP000002311">
    <property type="component" value="Chromosome IX"/>
</dbReference>
<dbReference type="RNAct" id="P40478">
    <property type="molecule type" value="protein"/>
</dbReference>
<dbReference type="GO" id="GO:0005741">
    <property type="term" value="C:mitochondrial outer membrane"/>
    <property type="evidence" value="ECO:0000314"/>
    <property type="project" value="SGD"/>
</dbReference>
<dbReference type="GO" id="GO:0005739">
    <property type="term" value="C:mitochondrion"/>
    <property type="evidence" value="ECO:0007005"/>
    <property type="project" value="SGD"/>
</dbReference>
<dbReference type="GO" id="GO:0046930">
    <property type="term" value="C:pore complex"/>
    <property type="evidence" value="ECO:0007669"/>
    <property type="project" value="UniProtKB-KW"/>
</dbReference>
<dbReference type="GO" id="GO:0005524">
    <property type="term" value="F:ATP binding"/>
    <property type="evidence" value="ECO:0007669"/>
    <property type="project" value="UniProtKB-KW"/>
</dbReference>
<dbReference type="GO" id="GO:0015288">
    <property type="term" value="F:porin activity"/>
    <property type="evidence" value="ECO:0007669"/>
    <property type="project" value="UniProtKB-KW"/>
</dbReference>
<dbReference type="GO" id="GO:0008308">
    <property type="term" value="F:voltage-gated monoatomic anion channel activity"/>
    <property type="evidence" value="ECO:0000250"/>
    <property type="project" value="SGD"/>
</dbReference>
<dbReference type="GO" id="GO:0045454">
    <property type="term" value="P:cell redox homeostasis"/>
    <property type="evidence" value="ECO:0000315"/>
    <property type="project" value="SGD"/>
</dbReference>
<dbReference type="GO" id="GO:0051027">
    <property type="term" value="P:DNA transport"/>
    <property type="evidence" value="ECO:0000315"/>
    <property type="project" value="SGD"/>
</dbReference>
<dbReference type="GO" id="GO:0006869">
    <property type="term" value="P:lipid transport"/>
    <property type="evidence" value="ECO:0007669"/>
    <property type="project" value="UniProtKB-KW"/>
</dbReference>
<dbReference type="CDD" id="cd07306">
    <property type="entry name" value="Porin3_VDAC"/>
    <property type="match status" value="1"/>
</dbReference>
<dbReference type="FunFam" id="2.40.160.10:FF:000016">
    <property type="entry name" value="Por1p"/>
    <property type="match status" value="1"/>
</dbReference>
<dbReference type="Gene3D" id="2.40.160.10">
    <property type="entry name" value="Porin"/>
    <property type="match status" value="1"/>
</dbReference>
<dbReference type="InterPro" id="IPR023614">
    <property type="entry name" value="Porin_dom_sf"/>
</dbReference>
<dbReference type="InterPro" id="IPR001925">
    <property type="entry name" value="Porin_Euk"/>
</dbReference>
<dbReference type="InterPro" id="IPR027246">
    <property type="entry name" value="Porin_Euk/Tom40"/>
</dbReference>
<dbReference type="PANTHER" id="PTHR11743:SF70">
    <property type="entry name" value="GH26960P-RELATED"/>
    <property type="match status" value="1"/>
</dbReference>
<dbReference type="PANTHER" id="PTHR11743">
    <property type="entry name" value="VOLTAGE-DEPENDENT ANION-SELECTIVE CHANNEL"/>
    <property type="match status" value="1"/>
</dbReference>
<dbReference type="Pfam" id="PF01459">
    <property type="entry name" value="Porin_3"/>
    <property type="match status" value="1"/>
</dbReference>
<dbReference type="PRINTS" id="PR00185">
    <property type="entry name" value="EUKARYTPORIN"/>
</dbReference>
<dbReference type="PROSITE" id="PS00558">
    <property type="entry name" value="EUKARYOTIC_PORIN"/>
    <property type="match status" value="1"/>
</dbReference>